<accession>Q5A1D3</accession>
<accession>A0A1D8PMK1</accession>
<accession>O13435</accession>
<accession>P28869</accession>
<accession>P87079</accession>
<accession>P87080</accession>
<accession>P87081</accession>
<accession>P87082</accession>
<accession>P87083</accession>
<accession>P87084</accession>
<accession>P87085</accession>
<accession>P87086</accession>
<accession>P87322</accession>
<accession>Q6LC13</accession>
<protein>
    <recommendedName>
        <fullName>Extracellular signal-regulated kinase 1</fullName>
        <shortName>ERK1</shortName>
        <ecNumber>2.7.11.24</ecNumber>
    </recommendedName>
    <alternativeName>
        <fullName>MAP kinase 1</fullName>
        <shortName>MAPK 1</shortName>
    </alternativeName>
</protein>
<dbReference type="EC" id="2.7.11.24"/>
<dbReference type="EMBL" id="CP017626">
    <property type="protein sequence ID" value="AOW29372.1"/>
    <property type="molecule type" value="Genomic_DNA"/>
</dbReference>
<dbReference type="EMBL" id="U95784">
    <property type="protein sequence ID" value="AAB88588.1"/>
    <property type="molecule type" value="Genomic_DNA"/>
</dbReference>
<dbReference type="EMBL" id="U95785">
    <property type="protein sequence ID" value="AAB88589.1"/>
    <property type="molecule type" value="Genomic_DNA"/>
</dbReference>
<dbReference type="EMBL" id="U95786">
    <property type="protein sequence ID" value="AAB88590.1"/>
    <property type="molecule type" value="Genomic_DNA"/>
</dbReference>
<dbReference type="EMBL" id="U95787">
    <property type="protein sequence ID" value="AAB88591.1"/>
    <property type="molecule type" value="Genomic_DNA"/>
</dbReference>
<dbReference type="EMBL" id="U95788">
    <property type="protein sequence ID" value="AAB88592.1"/>
    <property type="molecule type" value="Genomic_DNA"/>
</dbReference>
<dbReference type="EMBL" id="U95789">
    <property type="protein sequence ID" value="AAB88593.1"/>
    <property type="molecule type" value="Genomic_DNA"/>
</dbReference>
<dbReference type="EMBL" id="U95790">
    <property type="protein sequence ID" value="AAB88594.1"/>
    <property type="molecule type" value="Genomic_DNA"/>
</dbReference>
<dbReference type="EMBL" id="U95791">
    <property type="protein sequence ID" value="AAB88595.1"/>
    <property type="molecule type" value="Genomic_DNA"/>
</dbReference>
<dbReference type="EMBL" id="U95792">
    <property type="protein sequence ID" value="AAB88596.1"/>
    <property type="molecule type" value="Genomic_DNA"/>
</dbReference>
<dbReference type="EMBL" id="U95793">
    <property type="protein sequence ID" value="AAB88597.1"/>
    <property type="molecule type" value="Genomic_DNA"/>
</dbReference>
<dbReference type="EMBL" id="U95794">
    <property type="protein sequence ID" value="AAB88598.1"/>
    <property type="molecule type" value="Genomic_DNA"/>
</dbReference>
<dbReference type="EMBL" id="U95795">
    <property type="protein sequence ID" value="AAB88599.1"/>
    <property type="molecule type" value="Genomic_DNA"/>
</dbReference>
<dbReference type="EMBL" id="U95796">
    <property type="protein sequence ID" value="AAB88600.1"/>
    <property type="molecule type" value="Genomic_DNA"/>
</dbReference>
<dbReference type="EMBL" id="U95797">
    <property type="protein sequence ID" value="AAB88601.1"/>
    <property type="molecule type" value="Genomic_DNA"/>
</dbReference>
<dbReference type="EMBL" id="U95798">
    <property type="protein sequence ID" value="AAB88602.1"/>
    <property type="molecule type" value="Genomic_DNA"/>
</dbReference>
<dbReference type="RefSeq" id="XP_715542.2">
    <property type="nucleotide sequence ID" value="XM_710449.2"/>
</dbReference>
<dbReference type="SMR" id="Q5A1D3"/>
<dbReference type="BioGRID" id="1225837">
    <property type="interactions" value="9"/>
</dbReference>
<dbReference type="FunCoup" id="Q5A1D3">
    <property type="interactions" value="669"/>
</dbReference>
<dbReference type="IntAct" id="Q5A1D3">
    <property type="interactions" value="2"/>
</dbReference>
<dbReference type="STRING" id="237561.Q5A1D3"/>
<dbReference type="EnsemblFungi" id="C4_06480C_A-T">
    <property type="protein sequence ID" value="C4_06480C_A-T-p1"/>
    <property type="gene ID" value="C4_06480C_A"/>
</dbReference>
<dbReference type="GeneID" id="3642789"/>
<dbReference type="KEGG" id="cal:CAALFM_C406480CA"/>
<dbReference type="CGD" id="CAL0000176774">
    <property type="gene designation" value="CEK1"/>
</dbReference>
<dbReference type="VEuPathDB" id="FungiDB:C4_06480C_A"/>
<dbReference type="eggNOG" id="KOG0660">
    <property type="taxonomic scope" value="Eukaryota"/>
</dbReference>
<dbReference type="HOGENOM" id="CLU_000288_181_1_1"/>
<dbReference type="InParanoid" id="Q5A1D3"/>
<dbReference type="OMA" id="IAMMRFF"/>
<dbReference type="OrthoDB" id="192887at2759"/>
<dbReference type="PHI-base" id="PHI:10021"/>
<dbReference type="PHI-base" id="PHI:107"/>
<dbReference type="PHI-base" id="PHI:11018"/>
<dbReference type="PHI-base" id="PHI:6837"/>
<dbReference type="PHI-base" id="PHI:7663"/>
<dbReference type="PRO" id="PR:Q5A1D3"/>
<dbReference type="Proteomes" id="UP000000559">
    <property type="component" value="Chromosome 4"/>
</dbReference>
<dbReference type="GO" id="GO:0005737">
    <property type="term" value="C:cytoplasm"/>
    <property type="evidence" value="ECO:0000318"/>
    <property type="project" value="GO_Central"/>
</dbReference>
<dbReference type="GO" id="GO:0005634">
    <property type="term" value="C:nucleus"/>
    <property type="evidence" value="ECO:0000318"/>
    <property type="project" value="GO_Central"/>
</dbReference>
<dbReference type="GO" id="GO:0005524">
    <property type="term" value="F:ATP binding"/>
    <property type="evidence" value="ECO:0007669"/>
    <property type="project" value="UniProtKB-KW"/>
</dbReference>
<dbReference type="GO" id="GO:0004707">
    <property type="term" value="F:MAP kinase activity"/>
    <property type="evidence" value="ECO:0007669"/>
    <property type="project" value="UniProtKB-EC"/>
</dbReference>
<dbReference type="GO" id="GO:0106310">
    <property type="term" value="F:protein serine kinase activity"/>
    <property type="evidence" value="ECO:0007669"/>
    <property type="project" value="RHEA"/>
</dbReference>
<dbReference type="GO" id="GO:0004674">
    <property type="term" value="F:protein serine/threonine kinase activity"/>
    <property type="evidence" value="ECO:0000318"/>
    <property type="project" value="GO_Central"/>
</dbReference>
<dbReference type="GO" id="GO:0051301">
    <property type="term" value="P:cell division"/>
    <property type="evidence" value="ECO:0007669"/>
    <property type="project" value="UniProtKB-KW"/>
</dbReference>
<dbReference type="GO" id="GO:0009267">
    <property type="term" value="P:cellular response to starvation"/>
    <property type="evidence" value="ECO:0000315"/>
    <property type="project" value="CGD"/>
</dbReference>
<dbReference type="GO" id="GO:0030447">
    <property type="term" value="P:filamentous growth"/>
    <property type="evidence" value="ECO:0000315"/>
    <property type="project" value="CGD"/>
</dbReference>
<dbReference type="GO" id="GO:0036180">
    <property type="term" value="P:filamentous growth of a population of unicellular organisms in response to biotic stimulus"/>
    <property type="evidence" value="ECO:0000315"/>
    <property type="project" value="CGD"/>
</dbReference>
<dbReference type="GO" id="GO:0036170">
    <property type="term" value="P:filamentous growth of a population of unicellular organisms in response to starvation"/>
    <property type="evidence" value="ECO:0000315"/>
    <property type="project" value="CGD"/>
</dbReference>
<dbReference type="GO" id="GO:0009272">
    <property type="term" value="P:fungal-type cell wall biogenesis"/>
    <property type="evidence" value="ECO:0000315"/>
    <property type="project" value="CGD"/>
</dbReference>
<dbReference type="GO" id="GO:0031505">
    <property type="term" value="P:fungal-type cell wall organization"/>
    <property type="evidence" value="ECO:0000315"/>
    <property type="project" value="CGD"/>
</dbReference>
<dbReference type="GO" id="GO:0035556">
    <property type="term" value="P:intracellular signal transduction"/>
    <property type="evidence" value="ECO:0000318"/>
    <property type="project" value="GO_Central"/>
</dbReference>
<dbReference type="GO" id="GO:1990277">
    <property type="term" value="P:parasexual reproduction with cellular fusion"/>
    <property type="evidence" value="ECO:0000315"/>
    <property type="project" value="CGD"/>
</dbReference>
<dbReference type="GO" id="GO:0000750">
    <property type="term" value="P:pheromone-dependent signal transduction involved in conjugation with cellular fusion"/>
    <property type="evidence" value="ECO:0000318"/>
    <property type="project" value="GO_Central"/>
</dbReference>
<dbReference type="GO" id="GO:1900445">
    <property type="term" value="P:positive regulation of filamentous growth of a population of unicellular organisms in response to biotic stimulus"/>
    <property type="evidence" value="ECO:0000315"/>
    <property type="project" value="CGD"/>
</dbReference>
<dbReference type="GO" id="GO:1900436">
    <property type="term" value="P:positive regulation of filamentous growth of a population of unicellular organisms in response to starvation"/>
    <property type="evidence" value="ECO:0000315"/>
    <property type="project" value="CGD"/>
</dbReference>
<dbReference type="CDD" id="cd07849">
    <property type="entry name" value="STKc_ERK1_2_like"/>
    <property type="match status" value="1"/>
</dbReference>
<dbReference type="FunFam" id="1.10.510.10:FF:000040">
    <property type="entry name" value="Mitogen-activated protein kinase"/>
    <property type="match status" value="1"/>
</dbReference>
<dbReference type="FunFam" id="3.30.200.20:FF:000073">
    <property type="entry name" value="Mitogen-activated protein kinase"/>
    <property type="match status" value="1"/>
</dbReference>
<dbReference type="Gene3D" id="3.30.200.20">
    <property type="entry name" value="Phosphorylase Kinase, domain 1"/>
    <property type="match status" value="1"/>
</dbReference>
<dbReference type="Gene3D" id="1.10.510.10">
    <property type="entry name" value="Transferase(Phosphotransferase) domain 1"/>
    <property type="match status" value="1"/>
</dbReference>
<dbReference type="InterPro" id="IPR011009">
    <property type="entry name" value="Kinase-like_dom_sf"/>
</dbReference>
<dbReference type="InterPro" id="IPR050117">
    <property type="entry name" value="MAP_kinase"/>
</dbReference>
<dbReference type="InterPro" id="IPR003527">
    <property type="entry name" value="MAP_kinase_CS"/>
</dbReference>
<dbReference type="InterPro" id="IPR000719">
    <property type="entry name" value="Prot_kinase_dom"/>
</dbReference>
<dbReference type="InterPro" id="IPR017441">
    <property type="entry name" value="Protein_kinase_ATP_BS"/>
</dbReference>
<dbReference type="InterPro" id="IPR008271">
    <property type="entry name" value="Ser/Thr_kinase_AS"/>
</dbReference>
<dbReference type="PANTHER" id="PTHR24055">
    <property type="entry name" value="MITOGEN-ACTIVATED PROTEIN KINASE"/>
    <property type="match status" value="1"/>
</dbReference>
<dbReference type="Pfam" id="PF00069">
    <property type="entry name" value="Pkinase"/>
    <property type="match status" value="1"/>
</dbReference>
<dbReference type="SMART" id="SM00220">
    <property type="entry name" value="S_TKc"/>
    <property type="match status" value="1"/>
</dbReference>
<dbReference type="SUPFAM" id="SSF81995">
    <property type="entry name" value="beta-sandwich domain of Sec23/24"/>
    <property type="match status" value="1"/>
</dbReference>
<dbReference type="SUPFAM" id="SSF56112">
    <property type="entry name" value="Protein kinase-like (PK-like)"/>
    <property type="match status" value="1"/>
</dbReference>
<dbReference type="PROSITE" id="PS01351">
    <property type="entry name" value="MAPK"/>
    <property type="match status" value="1"/>
</dbReference>
<dbReference type="PROSITE" id="PS00107">
    <property type="entry name" value="PROTEIN_KINASE_ATP"/>
    <property type="match status" value="1"/>
</dbReference>
<dbReference type="PROSITE" id="PS50011">
    <property type="entry name" value="PROTEIN_KINASE_DOM"/>
    <property type="match status" value="1"/>
</dbReference>
<dbReference type="PROSITE" id="PS00108">
    <property type="entry name" value="PROTEIN_KINASE_ST"/>
    <property type="match status" value="1"/>
</dbReference>
<sequence length="421" mass="48536">MNIDQHHQLQQQHQQQMLQQQAQAQAQAQAQAQQQQQQQQQAAAAAAAANAAATTSSSPRQVSFNVSDHYQILEIVGEGAYGIVCSAIHKPSQQKVAIKKIEPFERSMLCLRTLRELKLLKHFNHENIISILAIQRPINYESFNEIYLIQELMETDLHRVIRTQNLSDDHIQYFIYQTLRALKAMHSANVLHRDLKPSNLLLNSNCDLKICDFGLARSIASQEDNYGFMTEYVATRWYRAPEIMLTFQEYTTAIDVWSVGCILAEMLSGRPLFPGRDYHNQLWLIMEVLGTPNMEDYYNIKSKRAREYIRSLPFCKKIPFSELFANTNNNTSTSTSNTGGRTNINPLALDLLEKLLIFNPAKRITVEDALKHPYLQLYHDPNDEPISDKIPEDFFDFDKMKDQLTIEDLKKLLYEEIMKPL</sequence>
<gene>
    <name type="primary">CEK1</name>
    <name type="synonym">ERK1</name>
    <name type="ordered locus">CAALFM_C406480CA</name>
    <name type="ORF">CaO19.10404</name>
    <name type="ORF">CaO19.2886</name>
</gene>
<comment type="catalytic activity">
    <reaction>
        <text>L-seryl-[protein] + ATP = O-phospho-L-seryl-[protein] + ADP + H(+)</text>
        <dbReference type="Rhea" id="RHEA:17989"/>
        <dbReference type="Rhea" id="RHEA-COMP:9863"/>
        <dbReference type="Rhea" id="RHEA-COMP:11604"/>
        <dbReference type="ChEBI" id="CHEBI:15378"/>
        <dbReference type="ChEBI" id="CHEBI:29999"/>
        <dbReference type="ChEBI" id="CHEBI:30616"/>
        <dbReference type="ChEBI" id="CHEBI:83421"/>
        <dbReference type="ChEBI" id="CHEBI:456216"/>
        <dbReference type="EC" id="2.7.11.24"/>
    </reaction>
</comment>
<comment type="catalytic activity">
    <reaction>
        <text>L-threonyl-[protein] + ATP = O-phospho-L-threonyl-[protein] + ADP + H(+)</text>
        <dbReference type="Rhea" id="RHEA:46608"/>
        <dbReference type="Rhea" id="RHEA-COMP:11060"/>
        <dbReference type="Rhea" id="RHEA-COMP:11605"/>
        <dbReference type="ChEBI" id="CHEBI:15378"/>
        <dbReference type="ChEBI" id="CHEBI:30013"/>
        <dbReference type="ChEBI" id="CHEBI:30616"/>
        <dbReference type="ChEBI" id="CHEBI:61977"/>
        <dbReference type="ChEBI" id="CHEBI:456216"/>
        <dbReference type="EC" id="2.7.11.24"/>
    </reaction>
</comment>
<comment type="cofactor">
    <cofactor evidence="1">
        <name>Mg(2+)</name>
        <dbReference type="ChEBI" id="CHEBI:18420"/>
    </cofactor>
</comment>
<comment type="activity regulation">
    <text evidence="1">Activated by tyrosine and threonine phosphorylation.</text>
</comment>
<comment type="interaction">
    <interactant intactId="EBI-8783371">
        <id>Q5A1D3</id>
    </interactant>
    <interactant intactId="EBI-18373">
        <id>P32917</id>
        <label>STE5</label>
    </interactant>
    <organismsDiffer>true</organismsDiffer>
    <experiments>2</experiments>
</comment>
<comment type="domain">
    <text>The TXY motif contains the threonine and tyrosine residues whose phosphorylation activates the MAP kinases.</text>
</comment>
<comment type="PTM">
    <text evidence="1">Dually phosphorylated on Thr-230 and Tyr-232, which activates the enzyme.</text>
</comment>
<comment type="similarity">
    <text evidence="4">Belongs to the protein kinase superfamily. CMGC Ser/Thr protein kinase family. MAP kinase subfamily.</text>
</comment>
<proteinExistence type="evidence at protein level"/>
<keyword id="KW-0067">ATP-binding</keyword>
<keyword id="KW-0131">Cell cycle</keyword>
<keyword id="KW-0132">Cell division</keyword>
<keyword id="KW-0418">Kinase</keyword>
<keyword id="KW-0498">Mitosis</keyword>
<keyword id="KW-0547">Nucleotide-binding</keyword>
<keyword id="KW-0597">Phosphoprotein</keyword>
<keyword id="KW-1185">Reference proteome</keyword>
<keyword id="KW-0723">Serine/threonine-protein kinase</keyword>
<keyword id="KW-0808">Transferase</keyword>
<reference key="1">
    <citation type="journal article" date="2004" name="Proc. Natl. Acad. Sci. U.S.A.">
        <title>The diploid genome sequence of Candida albicans.</title>
        <authorList>
            <person name="Jones T."/>
            <person name="Federspiel N.A."/>
            <person name="Chibana H."/>
            <person name="Dungan J."/>
            <person name="Kalman S."/>
            <person name="Magee B.B."/>
            <person name="Newport G."/>
            <person name="Thorstenson Y.R."/>
            <person name="Agabian N."/>
            <person name="Magee P.T."/>
            <person name="Davis R.W."/>
            <person name="Scherer S."/>
        </authorList>
    </citation>
    <scope>NUCLEOTIDE SEQUENCE [LARGE SCALE GENOMIC DNA]</scope>
    <source>
        <strain>SC5314 / ATCC MYA-2876</strain>
    </source>
</reference>
<reference key="2">
    <citation type="journal article" date="2007" name="Genome Biol.">
        <title>Assembly of the Candida albicans genome into sixteen supercontigs aligned on the eight chromosomes.</title>
        <authorList>
            <person name="van het Hoog M."/>
            <person name="Rast T.J."/>
            <person name="Martchenko M."/>
            <person name="Grindle S."/>
            <person name="Dignard D."/>
            <person name="Hogues H."/>
            <person name="Cuomo C."/>
            <person name="Berriman M."/>
            <person name="Scherer S."/>
            <person name="Magee B.B."/>
            <person name="Whiteway M."/>
            <person name="Chibana H."/>
            <person name="Nantel A."/>
            <person name="Magee P.T."/>
        </authorList>
    </citation>
    <scope>GENOME REANNOTATION</scope>
    <source>
        <strain>SC5314 / ATCC MYA-2876</strain>
    </source>
</reference>
<reference key="3">
    <citation type="journal article" date="2013" name="Genome Biol.">
        <title>Assembly of a phased diploid Candida albicans genome facilitates allele-specific measurements and provides a simple model for repeat and indel structure.</title>
        <authorList>
            <person name="Muzzey D."/>
            <person name="Schwartz K."/>
            <person name="Weissman J.S."/>
            <person name="Sherlock G."/>
        </authorList>
    </citation>
    <scope>NUCLEOTIDE SEQUENCE [LARGE SCALE GENOMIC DNA]</scope>
    <scope>GENOME REANNOTATION</scope>
    <source>
        <strain>SC5314 / ATCC MYA-2876</strain>
    </source>
</reference>
<reference key="4">
    <citation type="journal article" date="1998" name="FEMS Immunol. Med. Microbiol.">
        <title>Sequence analysis of a compound coding-region microsatellite in Candida albicans resolves homoplasies and provides a high-resolution tool for genotyping.</title>
        <authorList>
            <person name="Metzgar D."/>
            <person name="Field D."/>
            <person name="Haubrich R."/>
            <person name="Wills C."/>
        </authorList>
    </citation>
    <scope>NUCLEOTIDE SEQUENCE [GENOMIC DNA] OF 1-58</scope>
    <source>
        <strain>ATCC 36232</strain>
        <strain>ATCC 60193 / S-24</strain>
        <strain>R-2436</strain>
        <strain>R-2535</strain>
        <strain>R-2540</strain>
        <strain>R-2607</strain>
        <strain>R-2617</strain>
        <strain>R-2621</strain>
        <strain>R-2624</strain>
        <strain>R-2777</strain>
        <strain>R-2805</strain>
    </source>
</reference>
<evidence type="ECO:0000250" key="1"/>
<evidence type="ECO:0000255" key="2">
    <source>
        <dbReference type="PROSITE-ProRule" id="PRU00159"/>
    </source>
</evidence>
<evidence type="ECO:0000255" key="3">
    <source>
        <dbReference type="PROSITE-ProRule" id="PRU10027"/>
    </source>
</evidence>
<evidence type="ECO:0000305" key="4"/>
<name>ERK1_CANAL</name>
<organism>
    <name type="scientific">Candida albicans (strain SC5314 / ATCC MYA-2876)</name>
    <name type="common">Yeast</name>
    <dbReference type="NCBI Taxonomy" id="237561"/>
    <lineage>
        <taxon>Eukaryota</taxon>
        <taxon>Fungi</taxon>
        <taxon>Dikarya</taxon>
        <taxon>Ascomycota</taxon>
        <taxon>Saccharomycotina</taxon>
        <taxon>Pichiomycetes</taxon>
        <taxon>Debaryomycetaceae</taxon>
        <taxon>Candida/Lodderomyces clade</taxon>
        <taxon>Candida</taxon>
    </lineage>
</organism>
<feature type="chain" id="PRO_0000186325" description="Extracellular signal-regulated kinase 1">
    <location>
        <begin position="1"/>
        <end position="421"/>
    </location>
</feature>
<feature type="domain" description="Protein kinase" evidence="2">
    <location>
        <begin position="70"/>
        <end position="375"/>
    </location>
</feature>
<feature type="short sequence motif" description="TXY">
    <location>
        <begin position="230"/>
        <end position="232"/>
    </location>
</feature>
<feature type="active site" description="Proton acceptor" evidence="2 3">
    <location>
        <position position="194"/>
    </location>
</feature>
<feature type="binding site" evidence="2">
    <location>
        <begin position="76"/>
        <end position="84"/>
    </location>
    <ligand>
        <name>ATP</name>
        <dbReference type="ChEBI" id="CHEBI:30616"/>
    </ligand>
</feature>
<feature type="binding site" evidence="2">
    <location>
        <position position="99"/>
    </location>
    <ligand>
        <name>ATP</name>
        <dbReference type="ChEBI" id="CHEBI:30616"/>
    </ligand>
</feature>
<feature type="modified residue" description="Phosphothreonine" evidence="1">
    <location>
        <position position="230"/>
    </location>
</feature>
<feature type="modified residue" description="Phosphotyrosine" evidence="1">
    <location>
        <position position="232"/>
    </location>
</feature>
<feature type="sequence variant" description="In strain: ATCC 60193 / S-24; in allele 237 B.">
    <location>
        <begin position="32"/>
        <end position="35"/>
    </location>
</feature>
<feature type="sequence variant" description="In strain: R-2617; in allele 249 D.">
    <original>Q</original>
    <variation>QA</variation>
    <location>
        <position position="33"/>
    </location>
</feature>
<feature type="sequence variant" description="In strain: R-2805; in allele 255 A.">
    <original>QQ</original>
    <variation>AQAQA</variation>
    <location>
        <begin position="34"/>
        <end position="35"/>
    </location>
</feature>
<feature type="sequence variant" description="In strain: R-2617, R-2624, R-2777 and R-2805; in allele 246 D, 249 E, 249 C and 246 E.">
    <original>Q</original>
    <variation>A</variation>
    <location>
        <position position="34"/>
    </location>
</feature>
<feature type="sequence variant" description="In strain: ATCC 36232; in allele 225 A.">
    <location>
        <begin position="38"/>
        <end position="43"/>
    </location>
</feature>
<feature type="sequence variant" description="In strain: R-2621; in allele 237 A.">
    <location>
        <begin position="38"/>
        <end position="41"/>
    </location>
</feature>
<feature type="sequence variant" description="In strain: R-2621; in allele 249 B.">
    <original>Q</original>
    <variation>QQ</variation>
    <location>
        <position position="41"/>
    </location>
</feature>
<feature type="sequence variant" description="In strain: R-2540; in allele 243 A.">
    <location>
        <position position="41"/>
    </location>
</feature>
<feature type="sequence variant" description="In strain: R-2617; in allele 246 D.">
    <original>A</original>
    <variation>T</variation>
    <location>
        <position position="52"/>
    </location>
</feature>